<protein>
    <recommendedName>
        <fullName>Polycomb protein SCMH1</fullName>
    </recommendedName>
    <alternativeName>
        <fullName>Sex comb on midleg homolog 1</fullName>
    </alternativeName>
</protein>
<proteinExistence type="evidence at protein level"/>
<sequence>MLVCYSVLACEILWDLPCSIMGSPLGHFTWDKYLKETCSVPAPVHCFKQSYTPPSNEFKISMKLEAQDPRNTTSTCIATVVGLTGARLRLRLDGSDNKNDFWRLVDSAEIQPIGNCEKNGGMLQPPLGFRLNASSWPMFLLKTLNGAEMAPIRIFHKEPPSPSHNFFKMGMKLEAVDRKNPHFICPATIGEVRGSEVLVTFDGWRGAFDYWCRFDSRDIFPVGWCSLTGDNLQPPGTKVVIPKNPYPASDVNTEKPSIHSSTKTVLEHQPGQRGRKPGKKRGRTPKTLISHPISAPSKTAEPLKFPKKRGPKPGSKRKPRTLLNPPPASPTTSTPEPDTSTVPQDAATIPSSAMQAPTVCIYLNKNGSTGPHLDKKKVQQLPDHFGPARASVVLQQAVQACIDCAYHQKTVFSFLKQGHGGEVISAVFDREQHTLNLPAVNSITYVLRFLEKLCHNLRSDNLFGNQPFTQTHLSLTAIEYSHSHDRYLPGETFVLGNSLARSLEPHSDSMDSASNPTNLVSTSQRHRPLLSSCGLPPSTASAVRRLCSRGVLKGSNERRDMESFWKLNRSPGSDRYLESRDASRLSGRDPSSWTVEDVMQFVREADPQLGPHADLFRKHEIDGKALLLLRSDMMMKYMGLKLGPALKLSYHIDRLKQGKF</sequence>
<feature type="chain" id="PRO_0000114334" description="Polycomb protein SCMH1">
    <location>
        <begin position="1"/>
        <end position="660"/>
    </location>
</feature>
<feature type="repeat" description="MBT 1">
    <location>
        <begin position="28"/>
        <end position="126"/>
    </location>
</feature>
<feature type="repeat" description="MBT 2">
    <location>
        <begin position="134"/>
        <end position="235"/>
    </location>
</feature>
<feature type="domain" description="SAM" evidence="2">
    <location>
        <begin position="593"/>
        <end position="658"/>
    </location>
</feature>
<feature type="region of interest" description="Disordered" evidence="3">
    <location>
        <begin position="233"/>
        <end position="345"/>
    </location>
</feature>
<feature type="compositionally biased region" description="Basic residues" evidence="3">
    <location>
        <begin position="273"/>
        <end position="284"/>
    </location>
</feature>
<feature type="compositionally biased region" description="Basic residues" evidence="3">
    <location>
        <begin position="305"/>
        <end position="320"/>
    </location>
</feature>
<feature type="compositionally biased region" description="Low complexity" evidence="3">
    <location>
        <begin position="330"/>
        <end position="343"/>
    </location>
</feature>
<feature type="splice variant" id="VSP_051678" description="In isoform 3 and isoform 5." evidence="5 7 8 9">
    <location>
        <begin position="1"/>
        <end position="61"/>
    </location>
</feature>
<feature type="splice variant" id="VSP_051677" description="In isoform 4 and isoform 6." evidence="5 6">
    <original>MLVCYSVLACEILWDLPCSIMGSPLGHFTWDKYLKETCSVPAPVHCFK</original>
    <variation>M</variation>
    <location>
        <begin position="1"/>
        <end position="48"/>
    </location>
</feature>
<feature type="splice variant" id="VSP_051676" description="In isoform 2." evidence="10">
    <original>MLVCYSVLACEILWDLPCSIMGSP</original>
    <variation>MQPNVIDWSDVRKHKYGHLSESASQYQEAADILD</variation>
    <location>
        <begin position="1"/>
        <end position="24"/>
    </location>
</feature>
<feature type="splice variant" id="VSP_043395" description="In isoform 6." evidence="6">
    <location>
        <begin position="128"/>
        <end position="238"/>
    </location>
</feature>
<feature type="splice variant" id="VSP_051679" description="In isoform 2, isoform 4, isoform 5 and isoform 6." evidence="5 6 8">
    <location>
        <begin position="550"/>
        <end position="571"/>
    </location>
</feature>
<feature type="sequence conflict" description="In Ref. 3." evidence="10" ref="3">
    <original>F</original>
    <variation>L</variation>
    <location>
        <position position="463"/>
    </location>
</feature>
<feature type="helix" evidence="16">
    <location>
        <begin position="30"/>
        <end position="36"/>
    </location>
</feature>
<feature type="helix" evidence="16">
    <location>
        <begin position="44"/>
        <end position="46"/>
    </location>
</feature>
<feature type="strand" evidence="16">
    <location>
        <begin position="47"/>
        <end position="49"/>
    </location>
</feature>
<feature type="strand" evidence="16">
    <location>
        <begin position="63"/>
        <end position="68"/>
    </location>
</feature>
<feature type="strand" evidence="16">
    <location>
        <begin position="71"/>
        <end position="84"/>
    </location>
</feature>
<feature type="strand" evidence="16">
    <location>
        <begin position="87"/>
        <end position="92"/>
    </location>
</feature>
<feature type="strand" evidence="16">
    <location>
        <begin position="101"/>
        <end position="104"/>
    </location>
</feature>
<feature type="helix" evidence="16">
    <location>
        <begin position="115"/>
        <end position="118"/>
    </location>
</feature>
<feature type="helix" evidence="16">
    <location>
        <begin position="133"/>
        <end position="135"/>
    </location>
</feature>
<feature type="helix" evidence="16">
    <location>
        <begin position="136"/>
        <end position="144"/>
    </location>
</feature>
<feature type="helix" evidence="16">
    <location>
        <begin position="152"/>
        <end position="154"/>
    </location>
</feature>
<feature type="strand" evidence="16">
    <location>
        <begin position="172"/>
        <end position="176"/>
    </location>
</feature>
<feature type="strand" evidence="16">
    <location>
        <begin position="184"/>
        <end position="193"/>
    </location>
</feature>
<feature type="strand" evidence="16">
    <location>
        <begin position="196"/>
        <end position="201"/>
    </location>
</feature>
<feature type="turn" evidence="16">
    <location>
        <begin position="205"/>
        <end position="208"/>
    </location>
</feature>
<feature type="strand" evidence="16">
    <location>
        <begin position="210"/>
        <end position="213"/>
    </location>
</feature>
<feature type="helix" evidence="16">
    <location>
        <begin position="224"/>
        <end position="228"/>
    </location>
</feature>
<keyword id="KW-0002">3D-structure</keyword>
<keyword id="KW-0025">Alternative splicing</keyword>
<keyword id="KW-0217">Developmental protein</keyword>
<keyword id="KW-0539">Nucleus</keyword>
<keyword id="KW-1267">Proteomics identification</keyword>
<keyword id="KW-1185">Reference proteome</keyword>
<keyword id="KW-0677">Repeat</keyword>
<keyword id="KW-0678">Repressor</keyword>
<keyword id="KW-0804">Transcription</keyword>
<keyword id="KW-0805">Transcription regulation</keyword>
<organism>
    <name type="scientific">Homo sapiens</name>
    <name type="common">Human</name>
    <dbReference type="NCBI Taxonomy" id="9606"/>
    <lineage>
        <taxon>Eukaryota</taxon>
        <taxon>Metazoa</taxon>
        <taxon>Chordata</taxon>
        <taxon>Craniata</taxon>
        <taxon>Vertebrata</taxon>
        <taxon>Euteleostomi</taxon>
        <taxon>Mammalia</taxon>
        <taxon>Eutheria</taxon>
        <taxon>Euarchontoglires</taxon>
        <taxon>Primates</taxon>
        <taxon>Haplorrhini</taxon>
        <taxon>Catarrhini</taxon>
        <taxon>Hominidae</taxon>
        <taxon>Homo</taxon>
    </lineage>
</organism>
<gene>
    <name evidence="15" type="primary">SCMH1</name>
</gene>
<dbReference type="EMBL" id="AF149045">
    <property type="protein sequence ID" value="AAF01150.1"/>
    <property type="molecule type" value="mRNA"/>
</dbReference>
<dbReference type="EMBL" id="AF149046">
    <property type="protein sequence ID" value="AAF01151.1"/>
    <property type="molecule type" value="mRNA"/>
</dbReference>
<dbReference type="EMBL" id="AK299383">
    <property type="protein sequence ID" value="BAG61370.1"/>
    <property type="molecule type" value="mRNA"/>
</dbReference>
<dbReference type="EMBL" id="CR457161">
    <property type="protein sequence ID" value="CAG33442.1"/>
    <property type="molecule type" value="mRNA"/>
</dbReference>
<dbReference type="EMBL" id="BX640721">
    <property type="protein sequence ID" value="CAE45840.1"/>
    <property type="molecule type" value="mRNA"/>
</dbReference>
<dbReference type="EMBL" id="AL110502">
    <property type="protein sequence ID" value="CAI22109.1"/>
    <property type="molecule type" value="Genomic_DNA"/>
</dbReference>
<dbReference type="EMBL" id="AL391730">
    <property type="protein sequence ID" value="CAI22109.1"/>
    <property type="status" value="JOINED"/>
    <property type="molecule type" value="Genomic_DNA"/>
</dbReference>
<dbReference type="EMBL" id="AL110502">
    <property type="protein sequence ID" value="CAI22110.1"/>
    <property type="molecule type" value="Genomic_DNA"/>
</dbReference>
<dbReference type="EMBL" id="AL391730">
    <property type="protein sequence ID" value="CAI22110.1"/>
    <property type="status" value="JOINED"/>
    <property type="molecule type" value="Genomic_DNA"/>
</dbReference>
<dbReference type="EMBL" id="AL110502">
    <property type="protein sequence ID" value="CAI22111.1"/>
    <property type="molecule type" value="Genomic_DNA"/>
</dbReference>
<dbReference type="EMBL" id="AL391730">
    <property type="protein sequence ID" value="CAI22111.1"/>
    <property type="status" value="JOINED"/>
    <property type="molecule type" value="Genomic_DNA"/>
</dbReference>
<dbReference type="EMBL" id="AL606484">
    <property type="protein sequence ID" value="CAI22111.1"/>
    <property type="status" value="JOINED"/>
    <property type="molecule type" value="Genomic_DNA"/>
</dbReference>
<dbReference type="EMBL" id="AL110502">
    <property type="protein sequence ID" value="CAI22112.1"/>
    <property type="molecule type" value="Genomic_DNA"/>
</dbReference>
<dbReference type="EMBL" id="AL391730">
    <property type="protein sequence ID" value="CAI22112.1"/>
    <property type="status" value="JOINED"/>
    <property type="molecule type" value="Genomic_DNA"/>
</dbReference>
<dbReference type="EMBL" id="AL110502">
    <property type="protein sequence ID" value="CAI22113.1"/>
    <property type="molecule type" value="Genomic_DNA"/>
</dbReference>
<dbReference type="EMBL" id="AL391730">
    <property type="protein sequence ID" value="CAI22113.1"/>
    <property type="status" value="JOINED"/>
    <property type="molecule type" value="Genomic_DNA"/>
</dbReference>
<dbReference type="EMBL" id="AL391730">
    <property type="protein sequence ID" value="CAH72791.1"/>
    <property type="molecule type" value="Genomic_DNA"/>
</dbReference>
<dbReference type="EMBL" id="AL110502">
    <property type="protein sequence ID" value="CAH72791.1"/>
    <property type="status" value="JOINED"/>
    <property type="molecule type" value="Genomic_DNA"/>
</dbReference>
<dbReference type="EMBL" id="AL391730">
    <property type="protein sequence ID" value="CAH72793.1"/>
    <property type="molecule type" value="Genomic_DNA"/>
</dbReference>
<dbReference type="EMBL" id="AL110502">
    <property type="protein sequence ID" value="CAH72793.1"/>
    <property type="status" value="JOINED"/>
    <property type="molecule type" value="Genomic_DNA"/>
</dbReference>
<dbReference type="EMBL" id="AL391730">
    <property type="protein sequence ID" value="CAH72794.1"/>
    <property type="molecule type" value="Genomic_DNA"/>
</dbReference>
<dbReference type="EMBL" id="AL110502">
    <property type="protein sequence ID" value="CAH72794.1"/>
    <property type="status" value="JOINED"/>
    <property type="molecule type" value="Genomic_DNA"/>
</dbReference>
<dbReference type="EMBL" id="AL606484">
    <property type="protein sequence ID" value="CAH72794.1"/>
    <property type="status" value="JOINED"/>
    <property type="molecule type" value="Genomic_DNA"/>
</dbReference>
<dbReference type="EMBL" id="AL391730">
    <property type="protein sequence ID" value="CAH72795.1"/>
    <property type="molecule type" value="Genomic_DNA"/>
</dbReference>
<dbReference type="EMBL" id="AL110502">
    <property type="protein sequence ID" value="CAH72795.1"/>
    <property type="status" value="JOINED"/>
    <property type="molecule type" value="Genomic_DNA"/>
</dbReference>
<dbReference type="EMBL" id="AL391730">
    <property type="protein sequence ID" value="CAH72796.1"/>
    <property type="molecule type" value="Genomic_DNA"/>
</dbReference>
<dbReference type="EMBL" id="AL110502">
    <property type="protein sequence ID" value="CAH72796.1"/>
    <property type="status" value="JOINED"/>
    <property type="molecule type" value="Genomic_DNA"/>
</dbReference>
<dbReference type="EMBL" id="AL606484">
    <property type="protein sequence ID" value="CAH72242.1"/>
    <property type="molecule type" value="Genomic_DNA"/>
</dbReference>
<dbReference type="EMBL" id="AL110502">
    <property type="protein sequence ID" value="CAH72242.1"/>
    <property type="status" value="JOINED"/>
    <property type="molecule type" value="Genomic_DNA"/>
</dbReference>
<dbReference type="EMBL" id="AL391730">
    <property type="protein sequence ID" value="CAH72242.1"/>
    <property type="status" value="JOINED"/>
    <property type="molecule type" value="Genomic_DNA"/>
</dbReference>
<dbReference type="EMBL" id="BC009752">
    <property type="protein sequence ID" value="AAH09752.1"/>
    <property type="molecule type" value="mRNA"/>
</dbReference>
<dbReference type="EMBL" id="BC021252">
    <property type="protein sequence ID" value="AAH21252.1"/>
    <property type="molecule type" value="mRNA"/>
</dbReference>
<dbReference type="CCDS" id="CCDS30688.1">
    <molecule id="Q96GD3-1"/>
</dbReference>
<dbReference type="CCDS" id="CCDS461.1">
    <molecule id="Q96GD3-4"/>
</dbReference>
<dbReference type="CCDS" id="CCDS53301.1">
    <molecule id="Q96GD3-5"/>
</dbReference>
<dbReference type="CCDS" id="CCDS53302.1">
    <molecule id="Q96GD3-3"/>
</dbReference>
<dbReference type="CCDS" id="CCDS53303.1">
    <molecule id="Q96GD3-6"/>
</dbReference>
<dbReference type="CCDS" id="CCDS53304.1">
    <molecule id="Q96GD3-2"/>
</dbReference>
<dbReference type="RefSeq" id="NP_001026864.1">
    <molecule id="Q96GD3-1"/>
    <property type="nucleotide sequence ID" value="NM_001031694.3"/>
</dbReference>
<dbReference type="RefSeq" id="NP_001165689.1">
    <molecule id="Q96GD3-5"/>
    <property type="nucleotide sequence ID" value="NM_001172218.2"/>
</dbReference>
<dbReference type="RefSeq" id="NP_001165690.1">
    <molecule id="Q96GD3-2"/>
    <property type="nucleotide sequence ID" value="NM_001172219.2"/>
</dbReference>
<dbReference type="RefSeq" id="NP_001165691.1">
    <molecule id="Q96GD3-5"/>
    <property type="nucleotide sequence ID" value="NM_001172220.2"/>
</dbReference>
<dbReference type="RefSeq" id="NP_001165692.1">
    <molecule id="Q96GD3-3"/>
    <property type="nucleotide sequence ID" value="NM_001172221.3"/>
</dbReference>
<dbReference type="RefSeq" id="NP_001165693.1">
    <molecule id="Q96GD3-6"/>
    <property type="nucleotide sequence ID" value="NM_001172222.3"/>
</dbReference>
<dbReference type="RefSeq" id="NP_001381229.1">
    <molecule id="Q96GD3-1"/>
    <property type="nucleotide sequence ID" value="NM_001394300.1"/>
</dbReference>
<dbReference type="RefSeq" id="NP_001381230.1">
    <molecule id="Q96GD3-1"/>
    <property type="nucleotide sequence ID" value="NM_001394301.1"/>
</dbReference>
<dbReference type="RefSeq" id="NP_001381231.1">
    <molecule id="Q96GD3-1"/>
    <property type="nucleotide sequence ID" value="NM_001394302.1"/>
</dbReference>
<dbReference type="RefSeq" id="NP_001381232.1">
    <molecule id="Q96GD3-3"/>
    <property type="nucleotide sequence ID" value="NM_001394303.1"/>
</dbReference>
<dbReference type="RefSeq" id="NP_036368.1">
    <molecule id="Q96GD3-4"/>
    <property type="nucleotide sequence ID" value="NM_012236.4"/>
</dbReference>
<dbReference type="RefSeq" id="XP_006710527.1">
    <property type="nucleotide sequence ID" value="XM_006710464.1"/>
</dbReference>
<dbReference type="RefSeq" id="XP_011539335.1">
    <property type="nucleotide sequence ID" value="XM_011541033.2"/>
</dbReference>
<dbReference type="RefSeq" id="XP_011539338.1">
    <property type="nucleotide sequence ID" value="XM_011541036.2"/>
</dbReference>
<dbReference type="RefSeq" id="XP_016856188.1">
    <property type="nucleotide sequence ID" value="XM_017000699.1"/>
</dbReference>
<dbReference type="RefSeq" id="XP_016856196.1">
    <property type="nucleotide sequence ID" value="XM_017000707.1"/>
</dbReference>
<dbReference type="RefSeq" id="XP_047305523.1">
    <molecule id="Q96GD3-1"/>
    <property type="nucleotide sequence ID" value="XM_047449567.1"/>
</dbReference>
<dbReference type="RefSeq" id="XP_047305524.1">
    <molecule id="Q96GD3-2"/>
    <property type="nucleotide sequence ID" value="XM_047449568.1"/>
</dbReference>
<dbReference type="RefSeq" id="XP_047305534.1">
    <molecule id="Q96GD3-3"/>
    <property type="nucleotide sequence ID" value="XM_047449578.1"/>
</dbReference>
<dbReference type="RefSeq" id="XP_047305539.1">
    <molecule id="Q96GD3-3"/>
    <property type="nucleotide sequence ID" value="XM_047449583.1"/>
</dbReference>
<dbReference type="RefSeq" id="XP_054191196.1">
    <molecule id="Q96GD3-1"/>
    <property type="nucleotide sequence ID" value="XM_054335221.1"/>
</dbReference>
<dbReference type="RefSeq" id="XP_054191197.1">
    <molecule id="Q96GD3-2"/>
    <property type="nucleotide sequence ID" value="XM_054335222.1"/>
</dbReference>
<dbReference type="RefSeq" id="XP_054191200.1">
    <molecule id="Q96GD3-3"/>
    <property type="nucleotide sequence ID" value="XM_054335225.1"/>
</dbReference>
<dbReference type="RefSeq" id="XP_054191201.1">
    <molecule id="Q96GD3-3"/>
    <property type="nucleotide sequence ID" value="XM_054335226.1"/>
</dbReference>
<dbReference type="PDB" id="2P0K">
    <property type="method" value="X-ray"/>
    <property type="resolution" value="1.75 A"/>
    <property type="chains" value="A=27-238"/>
</dbReference>
<dbReference type="PDBsum" id="2P0K"/>
<dbReference type="SMR" id="Q96GD3"/>
<dbReference type="BioGRID" id="116609">
    <property type="interactions" value="56"/>
</dbReference>
<dbReference type="CORUM" id="Q96GD3"/>
<dbReference type="FunCoup" id="Q96GD3">
    <property type="interactions" value="1243"/>
</dbReference>
<dbReference type="IntAct" id="Q96GD3">
    <property type="interactions" value="45"/>
</dbReference>
<dbReference type="MINT" id="Q96GD3"/>
<dbReference type="STRING" id="9606.ENSP00000318094"/>
<dbReference type="DrugBank" id="DB03345">
    <property type="generic name" value="Mercaptoethanol"/>
</dbReference>
<dbReference type="GlyGen" id="Q96GD3">
    <property type="glycosylation" value="2 sites, 1 N-linked glycan (1 site), 1 O-linked glycan (1 site)"/>
</dbReference>
<dbReference type="iPTMnet" id="Q96GD3"/>
<dbReference type="PhosphoSitePlus" id="Q96GD3"/>
<dbReference type="BioMuta" id="SCMH1"/>
<dbReference type="DMDM" id="60390956"/>
<dbReference type="jPOST" id="Q96GD3"/>
<dbReference type="MassIVE" id="Q96GD3"/>
<dbReference type="PaxDb" id="9606-ENSP00000318094"/>
<dbReference type="PeptideAtlas" id="Q96GD3"/>
<dbReference type="ProteomicsDB" id="76617">
    <molecule id="Q96GD3-1"/>
</dbReference>
<dbReference type="ProteomicsDB" id="76618">
    <molecule id="Q96GD3-2"/>
</dbReference>
<dbReference type="ProteomicsDB" id="76619">
    <molecule id="Q96GD3-3"/>
</dbReference>
<dbReference type="ProteomicsDB" id="76620">
    <molecule id="Q96GD3-4"/>
</dbReference>
<dbReference type="ProteomicsDB" id="76621">
    <molecule id="Q96GD3-5"/>
</dbReference>
<dbReference type="ProteomicsDB" id="76622">
    <molecule id="Q96GD3-6"/>
</dbReference>
<dbReference type="Pumba" id="Q96GD3"/>
<dbReference type="ABCD" id="Q96GD3">
    <property type="antibodies" value="1 sequenced antibody"/>
</dbReference>
<dbReference type="Antibodypedia" id="32169">
    <property type="antibodies" value="231 antibodies from 24 providers"/>
</dbReference>
<dbReference type="DNASU" id="22955"/>
<dbReference type="Ensembl" id="ENST00000326197.11">
    <molecule id="Q96GD3-1"/>
    <property type="protein sequence ID" value="ENSP00000318094.7"/>
    <property type="gene ID" value="ENSG00000010803.17"/>
</dbReference>
<dbReference type="Ensembl" id="ENST00000337495.9">
    <molecule id="Q96GD3-2"/>
    <property type="protein sequence ID" value="ENSP00000337352.5"/>
    <property type="gene ID" value="ENSG00000010803.17"/>
</dbReference>
<dbReference type="Ensembl" id="ENST00000372595.5">
    <molecule id="Q96GD3-3"/>
    <property type="protein sequence ID" value="ENSP00000361676.1"/>
    <property type="gene ID" value="ENSG00000010803.17"/>
</dbReference>
<dbReference type="Ensembl" id="ENST00000372596.5">
    <molecule id="Q96GD3-5"/>
    <property type="protein sequence ID" value="ENSP00000361677.1"/>
    <property type="gene ID" value="ENSG00000010803.17"/>
</dbReference>
<dbReference type="Ensembl" id="ENST00000372597.5">
    <molecule id="Q96GD3-4"/>
    <property type="protein sequence ID" value="ENSP00000361678.1"/>
    <property type="gene ID" value="ENSG00000010803.17"/>
</dbReference>
<dbReference type="Ensembl" id="ENST00000456518.3">
    <molecule id="Q96GD3-6"/>
    <property type="protein sequence ID" value="ENSP00000403974.2"/>
    <property type="gene ID" value="ENSG00000010803.17"/>
</dbReference>
<dbReference type="GeneID" id="22955"/>
<dbReference type="KEGG" id="hsa:22955"/>
<dbReference type="UCSC" id="uc001cgp.4">
    <molecule id="Q96GD3-1"/>
    <property type="organism name" value="human"/>
</dbReference>
<dbReference type="AGR" id="HGNC:19003"/>
<dbReference type="CTD" id="22955"/>
<dbReference type="DisGeNET" id="22955"/>
<dbReference type="GeneCards" id="SCMH1"/>
<dbReference type="HGNC" id="HGNC:19003">
    <property type="gene designation" value="SCMH1"/>
</dbReference>
<dbReference type="HPA" id="ENSG00000010803">
    <property type="expression patterns" value="Low tissue specificity"/>
</dbReference>
<dbReference type="MIM" id="616396">
    <property type="type" value="gene"/>
</dbReference>
<dbReference type="neXtProt" id="NX_Q96GD3"/>
<dbReference type="OpenTargets" id="ENSG00000010803"/>
<dbReference type="PharmGKB" id="PA134870272"/>
<dbReference type="VEuPathDB" id="HostDB:ENSG00000010803"/>
<dbReference type="eggNOG" id="KOG3766">
    <property type="taxonomic scope" value="Eukaryota"/>
</dbReference>
<dbReference type="GeneTree" id="ENSGT00940000157999"/>
<dbReference type="HOGENOM" id="CLU_015000_1_1_1"/>
<dbReference type="InParanoid" id="Q96GD3"/>
<dbReference type="OMA" id="NKEFCSM"/>
<dbReference type="OrthoDB" id="5912862at2759"/>
<dbReference type="PAN-GO" id="Q96GD3">
    <property type="GO annotations" value="4 GO annotations based on evolutionary models"/>
</dbReference>
<dbReference type="PhylomeDB" id="Q96GD3"/>
<dbReference type="TreeFam" id="TF106488"/>
<dbReference type="PathwayCommons" id="Q96GD3"/>
<dbReference type="Reactome" id="R-HSA-2559580">
    <molecule id="Q96GD3-2"/>
    <property type="pathway name" value="Oxidative Stress Induced Senescence"/>
</dbReference>
<dbReference type="Reactome" id="R-HSA-3108214">
    <molecule id="Q96GD3-2"/>
    <property type="pathway name" value="SUMOylation of DNA damage response and repair proteins"/>
</dbReference>
<dbReference type="Reactome" id="R-HSA-3899300">
    <molecule id="Q96GD3-2"/>
    <property type="pathway name" value="SUMOylation of transcription cofactors"/>
</dbReference>
<dbReference type="Reactome" id="R-HSA-4551638">
    <molecule id="Q96GD3-2"/>
    <property type="pathway name" value="SUMOylation of chromatin organization proteins"/>
</dbReference>
<dbReference type="Reactome" id="R-HSA-4570464">
    <molecule id="Q96GD3-2"/>
    <property type="pathway name" value="SUMOylation of RNA binding proteins"/>
</dbReference>
<dbReference type="Reactome" id="R-HSA-4655427">
    <molecule id="Q96GD3-2"/>
    <property type="pathway name" value="SUMOylation of DNA methylation proteins"/>
</dbReference>
<dbReference type="Reactome" id="R-HSA-8939243">
    <molecule id="Q96GD3-2"/>
    <property type="pathway name" value="RUNX1 interacts with co-factors whose precise effect on RUNX1 targets is not known"/>
</dbReference>
<dbReference type="Reactome" id="R-HSA-8943724">
    <molecule id="Q96GD3-2"/>
    <property type="pathway name" value="Regulation of PTEN gene transcription"/>
</dbReference>
<dbReference type="SignaLink" id="Q96GD3"/>
<dbReference type="BioGRID-ORCS" id="22955">
    <property type="hits" value="16 hits in 1165 CRISPR screens"/>
</dbReference>
<dbReference type="ChiTaRS" id="SCMH1">
    <property type="organism name" value="human"/>
</dbReference>
<dbReference type="EvolutionaryTrace" id="Q96GD3"/>
<dbReference type="GeneWiki" id="SCMH1"/>
<dbReference type="GenomeRNAi" id="22955"/>
<dbReference type="Pharos" id="Q96GD3">
    <property type="development level" value="Tbio"/>
</dbReference>
<dbReference type="PRO" id="PR:Q96GD3"/>
<dbReference type="Proteomes" id="UP000005640">
    <property type="component" value="Chromosome 1"/>
</dbReference>
<dbReference type="RNAct" id="Q96GD3">
    <property type="molecule type" value="protein"/>
</dbReference>
<dbReference type="Bgee" id="ENSG00000010803">
    <property type="expression patterns" value="Expressed in lower esophagus muscularis layer and 176 other cell types or tissues"/>
</dbReference>
<dbReference type="ExpressionAtlas" id="Q96GD3">
    <property type="expression patterns" value="baseline and differential"/>
</dbReference>
<dbReference type="GO" id="GO:0005654">
    <property type="term" value="C:nucleoplasm"/>
    <property type="evidence" value="ECO:0000304"/>
    <property type="project" value="Reactome"/>
</dbReference>
<dbReference type="GO" id="GO:0005634">
    <property type="term" value="C:nucleus"/>
    <property type="evidence" value="ECO:0000318"/>
    <property type="project" value="GO_Central"/>
</dbReference>
<dbReference type="GO" id="GO:0003682">
    <property type="term" value="F:chromatin binding"/>
    <property type="evidence" value="ECO:0000318"/>
    <property type="project" value="GO_Central"/>
</dbReference>
<dbReference type="GO" id="GO:0042393">
    <property type="term" value="F:histone binding"/>
    <property type="evidence" value="ECO:0000318"/>
    <property type="project" value="GO_Central"/>
</dbReference>
<dbReference type="GO" id="GO:0031507">
    <property type="term" value="P:heterochromatin formation"/>
    <property type="evidence" value="ECO:0000250"/>
    <property type="project" value="UniProtKB"/>
</dbReference>
<dbReference type="GO" id="GO:0045892">
    <property type="term" value="P:negative regulation of DNA-templated transcription"/>
    <property type="evidence" value="ECO:0000318"/>
    <property type="project" value="GO_Central"/>
</dbReference>
<dbReference type="CDD" id="cd20105">
    <property type="entry name" value="MBT_SCMH1_rpt1"/>
    <property type="match status" value="1"/>
</dbReference>
<dbReference type="CDD" id="cd20108">
    <property type="entry name" value="MBT_SCMH1_rpt2"/>
    <property type="match status" value="1"/>
</dbReference>
<dbReference type="CDD" id="cd09578">
    <property type="entry name" value="SAM_Scm"/>
    <property type="match status" value="1"/>
</dbReference>
<dbReference type="FunFam" id="1.10.150.50:FF:000018">
    <property type="entry name" value="Polycomb protein scmh1 isoform 4"/>
    <property type="match status" value="1"/>
</dbReference>
<dbReference type="FunFam" id="3.90.1150.190:FF:000001">
    <property type="entry name" value="Polycomb protein scmh1 isoform 4"/>
    <property type="match status" value="1"/>
</dbReference>
<dbReference type="FunFam" id="2.30.30.140:FF:000016">
    <property type="entry name" value="polycomb protein SCMH1 isoform X1"/>
    <property type="match status" value="1"/>
</dbReference>
<dbReference type="Gene3D" id="2.30.30.140">
    <property type="match status" value="2"/>
</dbReference>
<dbReference type="Gene3D" id="3.90.1150.190">
    <property type="entry name" value="SLED domain"/>
    <property type="match status" value="1"/>
</dbReference>
<dbReference type="Gene3D" id="1.10.150.50">
    <property type="entry name" value="Transcription Factor, Ets-1"/>
    <property type="match status" value="1"/>
</dbReference>
<dbReference type="InterPro" id="IPR004092">
    <property type="entry name" value="Mbt"/>
</dbReference>
<dbReference type="InterPro" id="IPR047279">
    <property type="entry name" value="MBT_SCMH1_rpt1"/>
</dbReference>
<dbReference type="InterPro" id="IPR047280">
    <property type="entry name" value="MBT_SCMH1_rpt2"/>
</dbReference>
<dbReference type="InterPro" id="IPR050548">
    <property type="entry name" value="PcG_chromatin_remod_factors"/>
</dbReference>
<dbReference type="InterPro" id="IPR001660">
    <property type="entry name" value="SAM"/>
</dbReference>
<dbReference type="InterPro" id="IPR013761">
    <property type="entry name" value="SAM/pointed_sf"/>
</dbReference>
<dbReference type="InterPro" id="IPR047531">
    <property type="entry name" value="SAM_Scm-like"/>
</dbReference>
<dbReference type="InterPro" id="IPR033763">
    <property type="entry name" value="SCML2_RBR"/>
</dbReference>
<dbReference type="InterPro" id="IPR021987">
    <property type="entry name" value="SLED"/>
</dbReference>
<dbReference type="InterPro" id="IPR038348">
    <property type="entry name" value="SLED_sf"/>
</dbReference>
<dbReference type="PANTHER" id="PTHR12247">
    <property type="entry name" value="POLYCOMB GROUP PROTEIN"/>
    <property type="match status" value="1"/>
</dbReference>
<dbReference type="PANTHER" id="PTHR12247:SF68">
    <property type="entry name" value="POLYCOMB PROTEIN SCMH1"/>
    <property type="match status" value="1"/>
</dbReference>
<dbReference type="Pfam" id="PF02820">
    <property type="entry name" value="MBT"/>
    <property type="match status" value="2"/>
</dbReference>
<dbReference type="Pfam" id="PF17208">
    <property type="entry name" value="RBR"/>
    <property type="match status" value="1"/>
</dbReference>
<dbReference type="Pfam" id="PF00536">
    <property type="entry name" value="SAM_1"/>
    <property type="match status" value="1"/>
</dbReference>
<dbReference type="Pfam" id="PF12140">
    <property type="entry name" value="SLED"/>
    <property type="match status" value="1"/>
</dbReference>
<dbReference type="SMART" id="SM00561">
    <property type="entry name" value="MBT"/>
    <property type="match status" value="2"/>
</dbReference>
<dbReference type="SMART" id="SM00454">
    <property type="entry name" value="SAM"/>
    <property type="match status" value="1"/>
</dbReference>
<dbReference type="SUPFAM" id="SSF47769">
    <property type="entry name" value="SAM/Pointed domain"/>
    <property type="match status" value="1"/>
</dbReference>
<dbReference type="SUPFAM" id="SSF63748">
    <property type="entry name" value="Tudor/PWWP/MBT"/>
    <property type="match status" value="2"/>
</dbReference>
<dbReference type="PROSITE" id="PS51079">
    <property type="entry name" value="MBT"/>
    <property type="match status" value="2"/>
</dbReference>
<dbReference type="PROSITE" id="PS50105">
    <property type="entry name" value="SAM_DOMAIN"/>
    <property type="match status" value="1"/>
</dbReference>
<accession>Q96GD3</accession>
<accession>B4DRQ8</accession>
<accession>Q5VT76</accession>
<accession>Q6IAJ4</accession>
<accession>Q8WU48</accession>
<accession>Q9UKM5</accession>
<accession>Q9UKM6</accession>
<reference evidence="10 11" key="1">
    <citation type="journal article" date="1999" name="Gene">
        <title>The human homolog of Sex comb on midleg (SCMH1) maps to chromosome 1p34.</title>
        <authorList>
            <person name="Berger J."/>
            <person name="Kurahashi H."/>
            <person name="Takihara Y."/>
            <person name="Shimada K."/>
            <person name="Brock H.W."/>
            <person name="Randazzo F."/>
        </authorList>
    </citation>
    <scope>NUCLEOTIDE SEQUENCE [MRNA] (ISOFORMS 4 AND 5)</scope>
    <scope>TISSUE SPECIFICITY</scope>
    <source>
        <tissue evidence="11">Heart</tissue>
        <tissue evidence="4">Skeletal muscle</tissue>
    </source>
</reference>
<reference key="2">
    <citation type="journal article" date="2004" name="Nat. Genet.">
        <title>Complete sequencing and characterization of 21,243 full-length human cDNAs.</title>
        <authorList>
            <person name="Ota T."/>
            <person name="Suzuki Y."/>
            <person name="Nishikawa T."/>
            <person name="Otsuki T."/>
            <person name="Sugiyama T."/>
            <person name="Irie R."/>
            <person name="Wakamatsu A."/>
            <person name="Hayashi K."/>
            <person name="Sato H."/>
            <person name="Nagai K."/>
            <person name="Kimura K."/>
            <person name="Makita H."/>
            <person name="Sekine M."/>
            <person name="Obayashi M."/>
            <person name="Nishi T."/>
            <person name="Shibahara T."/>
            <person name="Tanaka T."/>
            <person name="Ishii S."/>
            <person name="Yamamoto J."/>
            <person name="Saito K."/>
            <person name="Kawai Y."/>
            <person name="Isono Y."/>
            <person name="Nakamura Y."/>
            <person name="Nagahari K."/>
            <person name="Murakami K."/>
            <person name="Yasuda T."/>
            <person name="Iwayanagi T."/>
            <person name="Wagatsuma M."/>
            <person name="Shiratori A."/>
            <person name="Sudo H."/>
            <person name="Hosoiri T."/>
            <person name="Kaku Y."/>
            <person name="Kodaira H."/>
            <person name="Kondo H."/>
            <person name="Sugawara M."/>
            <person name="Takahashi M."/>
            <person name="Kanda K."/>
            <person name="Yokoi T."/>
            <person name="Furuya T."/>
            <person name="Kikkawa E."/>
            <person name="Omura Y."/>
            <person name="Abe K."/>
            <person name="Kamihara K."/>
            <person name="Katsuta N."/>
            <person name="Sato K."/>
            <person name="Tanikawa M."/>
            <person name="Yamazaki M."/>
            <person name="Ninomiya K."/>
            <person name="Ishibashi T."/>
            <person name="Yamashita H."/>
            <person name="Murakawa K."/>
            <person name="Fujimori K."/>
            <person name="Tanai H."/>
            <person name="Kimata M."/>
            <person name="Watanabe M."/>
            <person name="Hiraoka S."/>
            <person name="Chiba Y."/>
            <person name="Ishida S."/>
            <person name="Ono Y."/>
            <person name="Takiguchi S."/>
            <person name="Watanabe S."/>
            <person name="Yosida M."/>
            <person name="Hotuta T."/>
            <person name="Kusano J."/>
            <person name="Kanehori K."/>
            <person name="Takahashi-Fujii A."/>
            <person name="Hara H."/>
            <person name="Tanase T.-O."/>
            <person name="Nomura Y."/>
            <person name="Togiya S."/>
            <person name="Komai F."/>
            <person name="Hara R."/>
            <person name="Takeuchi K."/>
            <person name="Arita M."/>
            <person name="Imose N."/>
            <person name="Musashino K."/>
            <person name="Yuuki H."/>
            <person name="Oshima A."/>
            <person name="Sasaki N."/>
            <person name="Aotsuka S."/>
            <person name="Yoshikawa Y."/>
            <person name="Matsunawa H."/>
            <person name="Ichihara T."/>
            <person name="Shiohata N."/>
            <person name="Sano S."/>
            <person name="Moriya S."/>
            <person name="Momiyama H."/>
            <person name="Satoh N."/>
            <person name="Takami S."/>
            <person name="Terashima Y."/>
            <person name="Suzuki O."/>
            <person name="Nakagawa S."/>
            <person name="Senoh A."/>
            <person name="Mizoguchi H."/>
            <person name="Goto Y."/>
            <person name="Shimizu F."/>
            <person name="Wakebe H."/>
            <person name="Hishigaki H."/>
            <person name="Watanabe T."/>
            <person name="Sugiyama A."/>
            <person name="Takemoto M."/>
            <person name="Kawakami B."/>
            <person name="Yamazaki M."/>
            <person name="Watanabe K."/>
            <person name="Kumagai A."/>
            <person name="Itakura S."/>
            <person name="Fukuzumi Y."/>
            <person name="Fujimori Y."/>
            <person name="Komiyama M."/>
            <person name="Tashiro H."/>
            <person name="Tanigami A."/>
            <person name="Fujiwara T."/>
            <person name="Ono T."/>
            <person name="Yamada K."/>
            <person name="Fujii Y."/>
            <person name="Ozaki K."/>
            <person name="Hirao M."/>
            <person name="Ohmori Y."/>
            <person name="Kawabata A."/>
            <person name="Hikiji T."/>
            <person name="Kobatake N."/>
            <person name="Inagaki H."/>
            <person name="Ikema Y."/>
            <person name="Okamoto S."/>
            <person name="Okitani R."/>
            <person name="Kawakami T."/>
            <person name="Noguchi S."/>
            <person name="Itoh T."/>
            <person name="Shigeta K."/>
            <person name="Senba T."/>
            <person name="Matsumura K."/>
            <person name="Nakajima Y."/>
            <person name="Mizuno T."/>
            <person name="Morinaga M."/>
            <person name="Sasaki M."/>
            <person name="Togashi T."/>
            <person name="Oyama M."/>
            <person name="Hata H."/>
            <person name="Watanabe M."/>
            <person name="Komatsu T."/>
            <person name="Mizushima-Sugano J."/>
            <person name="Satoh T."/>
            <person name="Shirai Y."/>
            <person name="Takahashi Y."/>
            <person name="Nakagawa K."/>
            <person name="Okumura K."/>
            <person name="Nagase T."/>
            <person name="Nomura N."/>
            <person name="Kikuchi H."/>
            <person name="Masuho Y."/>
            <person name="Yamashita R."/>
            <person name="Nakai K."/>
            <person name="Yada T."/>
            <person name="Nakamura Y."/>
            <person name="Ohara O."/>
            <person name="Isogai T."/>
            <person name="Sugano S."/>
        </authorList>
    </citation>
    <scope>NUCLEOTIDE SEQUENCE [LARGE SCALE MRNA] (ISOFORM 6)</scope>
    <source>
        <tissue>Tongue</tissue>
    </source>
</reference>
<reference evidence="10 14" key="3">
    <citation type="submission" date="2004-06" db="EMBL/GenBank/DDBJ databases">
        <title>Cloning of human full open reading frames in Gateway(TM) system entry vector (pDONR201).</title>
        <authorList>
            <person name="Ebert L."/>
            <person name="Schick M."/>
            <person name="Neubert P."/>
            <person name="Schatten R."/>
            <person name="Henze S."/>
            <person name="Korn B."/>
        </authorList>
    </citation>
    <scope>NUCLEOTIDE SEQUENCE [LARGE SCALE MRNA] (ISOFORM 3)</scope>
</reference>
<reference key="4">
    <citation type="journal article" date="2007" name="BMC Genomics">
        <title>The full-ORF clone resource of the German cDNA consortium.</title>
        <authorList>
            <person name="Bechtel S."/>
            <person name="Rosenfelder H."/>
            <person name="Duda A."/>
            <person name="Schmidt C.P."/>
            <person name="Ernst U."/>
            <person name="Wellenreuther R."/>
            <person name="Mehrle A."/>
            <person name="Schuster C."/>
            <person name="Bahr A."/>
            <person name="Bloecker H."/>
            <person name="Heubner D."/>
            <person name="Hoerlein A."/>
            <person name="Michel G."/>
            <person name="Wedler H."/>
            <person name="Koehrer K."/>
            <person name="Ottenwaelder B."/>
            <person name="Poustka A."/>
            <person name="Wiemann S."/>
            <person name="Schupp I."/>
        </authorList>
    </citation>
    <scope>NUCLEOTIDE SEQUENCE [LARGE SCALE MRNA] (ISOFORM 5)</scope>
    <source>
        <tissue>Fetal brain</tissue>
    </source>
</reference>
<reference key="5">
    <citation type="journal article" date="2006" name="Nature">
        <title>The DNA sequence and biological annotation of human chromosome 1.</title>
        <authorList>
            <person name="Gregory S.G."/>
            <person name="Barlow K.F."/>
            <person name="McLay K.E."/>
            <person name="Kaul R."/>
            <person name="Swarbreck D."/>
            <person name="Dunham A."/>
            <person name="Scott C.E."/>
            <person name="Howe K.L."/>
            <person name="Woodfine K."/>
            <person name="Spencer C.C.A."/>
            <person name="Jones M.C."/>
            <person name="Gillson C."/>
            <person name="Searle S."/>
            <person name="Zhou Y."/>
            <person name="Kokocinski F."/>
            <person name="McDonald L."/>
            <person name="Evans R."/>
            <person name="Phillips K."/>
            <person name="Atkinson A."/>
            <person name="Cooper R."/>
            <person name="Jones C."/>
            <person name="Hall R.E."/>
            <person name="Andrews T.D."/>
            <person name="Lloyd C."/>
            <person name="Ainscough R."/>
            <person name="Almeida J.P."/>
            <person name="Ambrose K.D."/>
            <person name="Anderson F."/>
            <person name="Andrew R.W."/>
            <person name="Ashwell R.I.S."/>
            <person name="Aubin K."/>
            <person name="Babbage A.K."/>
            <person name="Bagguley C.L."/>
            <person name="Bailey J."/>
            <person name="Beasley H."/>
            <person name="Bethel G."/>
            <person name="Bird C.P."/>
            <person name="Bray-Allen S."/>
            <person name="Brown J.Y."/>
            <person name="Brown A.J."/>
            <person name="Buckley D."/>
            <person name="Burton J."/>
            <person name="Bye J."/>
            <person name="Carder C."/>
            <person name="Chapman J.C."/>
            <person name="Clark S.Y."/>
            <person name="Clarke G."/>
            <person name="Clee C."/>
            <person name="Cobley V."/>
            <person name="Collier R.E."/>
            <person name="Corby N."/>
            <person name="Coville G.J."/>
            <person name="Davies J."/>
            <person name="Deadman R."/>
            <person name="Dunn M."/>
            <person name="Earthrowl M."/>
            <person name="Ellington A.G."/>
            <person name="Errington H."/>
            <person name="Frankish A."/>
            <person name="Frankland J."/>
            <person name="French L."/>
            <person name="Garner P."/>
            <person name="Garnett J."/>
            <person name="Gay L."/>
            <person name="Ghori M.R.J."/>
            <person name="Gibson R."/>
            <person name="Gilby L.M."/>
            <person name="Gillett W."/>
            <person name="Glithero R.J."/>
            <person name="Grafham D.V."/>
            <person name="Griffiths C."/>
            <person name="Griffiths-Jones S."/>
            <person name="Grocock R."/>
            <person name="Hammond S."/>
            <person name="Harrison E.S.I."/>
            <person name="Hart E."/>
            <person name="Haugen E."/>
            <person name="Heath P.D."/>
            <person name="Holmes S."/>
            <person name="Holt K."/>
            <person name="Howden P.J."/>
            <person name="Hunt A.R."/>
            <person name="Hunt S.E."/>
            <person name="Hunter G."/>
            <person name="Isherwood J."/>
            <person name="James R."/>
            <person name="Johnson C."/>
            <person name="Johnson D."/>
            <person name="Joy A."/>
            <person name="Kay M."/>
            <person name="Kershaw J.K."/>
            <person name="Kibukawa M."/>
            <person name="Kimberley A.M."/>
            <person name="King A."/>
            <person name="Knights A.J."/>
            <person name="Lad H."/>
            <person name="Laird G."/>
            <person name="Lawlor S."/>
            <person name="Leongamornlert D.A."/>
            <person name="Lloyd D.M."/>
            <person name="Loveland J."/>
            <person name="Lovell J."/>
            <person name="Lush M.J."/>
            <person name="Lyne R."/>
            <person name="Martin S."/>
            <person name="Mashreghi-Mohammadi M."/>
            <person name="Matthews L."/>
            <person name="Matthews N.S.W."/>
            <person name="McLaren S."/>
            <person name="Milne S."/>
            <person name="Mistry S."/>
            <person name="Moore M.J.F."/>
            <person name="Nickerson T."/>
            <person name="O'Dell C.N."/>
            <person name="Oliver K."/>
            <person name="Palmeiri A."/>
            <person name="Palmer S.A."/>
            <person name="Parker A."/>
            <person name="Patel D."/>
            <person name="Pearce A.V."/>
            <person name="Peck A.I."/>
            <person name="Pelan S."/>
            <person name="Phelps K."/>
            <person name="Phillimore B.J."/>
            <person name="Plumb R."/>
            <person name="Rajan J."/>
            <person name="Raymond C."/>
            <person name="Rouse G."/>
            <person name="Saenphimmachak C."/>
            <person name="Sehra H.K."/>
            <person name="Sheridan E."/>
            <person name="Shownkeen R."/>
            <person name="Sims S."/>
            <person name="Skuce C.D."/>
            <person name="Smith M."/>
            <person name="Steward C."/>
            <person name="Subramanian S."/>
            <person name="Sycamore N."/>
            <person name="Tracey A."/>
            <person name="Tromans A."/>
            <person name="Van Helmond Z."/>
            <person name="Wall M."/>
            <person name="Wallis J.M."/>
            <person name="White S."/>
            <person name="Whitehead S.L."/>
            <person name="Wilkinson J.E."/>
            <person name="Willey D.L."/>
            <person name="Williams H."/>
            <person name="Wilming L."/>
            <person name="Wray P.W."/>
            <person name="Wu Z."/>
            <person name="Coulson A."/>
            <person name="Vaudin M."/>
            <person name="Sulston J.E."/>
            <person name="Durbin R.M."/>
            <person name="Hubbard T."/>
            <person name="Wooster R."/>
            <person name="Dunham I."/>
            <person name="Carter N.P."/>
            <person name="McVean G."/>
            <person name="Ross M.T."/>
            <person name="Harrow J."/>
            <person name="Olson M.V."/>
            <person name="Beck S."/>
            <person name="Rogers J."/>
            <person name="Bentley D.R."/>
        </authorList>
    </citation>
    <scope>NUCLEOTIDE SEQUENCE [LARGE SCALE GENOMIC DNA] (ISOFORM 2)</scope>
</reference>
<reference evidence="10 13" key="6">
    <citation type="journal article" date="2004" name="Genome Res.">
        <title>The status, quality, and expansion of the NIH full-length cDNA project: the Mammalian Gene Collection (MGC).</title>
        <authorList>
            <consortium name="The MGC Project Team"/>
        </authorList>
    </citation>
    <scope>NUCLEOTIDE SEQUENCE [LARGE SCALE MRNA] (ISOFORMS 1 AND 3)</scope>
    <source>
        <tissue evidence="13">Eye</tissue>
        <tissue evidence="12">Muscle</tissue>
    </source>
</reference>
<reference key="7">
    <citation type="journal article" date="2002" name="Mol. Cell. Biol.">
        <title>The core of the polycomb repressive complex is compositionally and functionally conserved in flies and humans.</title>
        <authorList>
            <person name="Levine S.S."/>
            <person name="Weiss A."/>
            <person name="Erdjument-Bromage H."/>
            <person name="Shao Z."/>
            <person name="Tempst P."/>
            <person name="Kingston R.E."/>
        </authorList>
    </citation>
    <scope>IDENTIFICATION BY MASS SPECTROMETRY</scope>
    <scope>ASSOCIATION WITH A PRC1-LIKE COMPLEX</scope>
</reference>
<comment type="function">
    <text evidence="1">Associates with Polycomb group (PcG) multiprotein complexes; the complex class is required to maintain the transcriptionally repressive state of some genes.</text>
</comment>
<comment type="subunit">
    <text evidence="1">Interacts with the SAM domain of PHC1 via its SAM domain in vitro (By similarity). Associates with a PRC1-like complex.</text>
</comment>
<comment type="interaction">
    <interactant intactId="EBI-713793">
        <id>Q96GD3</id>
    </interactant>
    <interactant intactId="EBI-744820">
        <id>Q9UM19</id>
        <label>HPCAL4</label>
    </interactant>
    <organismsDiffer>false</organismsDiffer>
    <experiments>3</experiments>
</comment>
<comment type="interaction">
    <interactant intactId="EBI-713793">
        <id>Q96GD3</id>
    </interactant>
    <interactant intactId="EBI-749530">
        <id>P43365</id>
        <label>MAGEA12</label>
    </interactant>
    <organismsDiffer>false</organismsDiffer>
    <experiments>3</experiments>
</comment>
<comment type="interaction">
    <interactant intactId="EBI-713793">
        <id>Q96GD3</id>
    </interactant>
    <interactant intactId="EBI-747398">
        <id>Q9UHJ3</id>
        <label>SFMBT1</label>
    </interactant>
    <organismsDiffer>false</organismsDiffer>
    <experiments>3</experiments>
</comment>
<comment type="interaction">
    <interactant intactId="EBI-713793">
        <id>Q96GD3</id>
    </interactant>
    <interactant intactId="EBI-12025260">
        <id>Q5VUG0</id>
        <label>SFMBT2</label>
    </interactant>
    <organismsDiffer>false</organismsDiffer>
    <experiments>3</experiments>
</comment>
<comment type="interaction">
    <interactant intactId="EBI-713793">
        <id>Q96GD3</id>
    </interactant>
    <interactant intactId="EBI-741480">
        <id>Q9UMX0</id>
        <label>UBQLN1</label>
    </interactant>
    <organismsDiffer>false</organismsDiffer>
    <experiments>3</experiments>
</comment>
<comment type="interaction">
    <interactant intactId="EBI-713793">
        <id>Q96GD3</id>
    </interactant>
    <interactant intactId="EBI-10173939">
        <id>Q9UMX0-2</id>
        <label>UBQLN1</label>
    </interactant>
    <organismsDiffer>false</organismsDiffer>
    <experiments>3</experiments>
</comment>
<comment type="subcellular location">
    <subcellularLocation>
        <location evidence="10">Nucleus</location>
    </subcellularLocation>
</comment>
<comment type="alternative products">
    <event type="alternative splicing"/>
    <isoform>
        <id>Q96GD3-1</id>
        <name>1</name>
        <sequence type="displayed"/>
    </isoform>
    <isoform>
        <id>Q96GD3-2</id>
        <name>2</name>
        <sequence type="described" ref="VSP_051676 VSP_051679"/>
    </isoform>
    <isoform>
        <id>Q96GD3-3</id>
        <name>3</name>
        <sequence type="described" ref="VSP_051678"/>
    </isoform>
    <isoform>
        <id>Q96GD3-4</id>
        <name evidence="4">4</name>
        <sequence type="described" ref="VSP_051677 VSP_051679"/>
    </isoform>
    <isoform>
        <id>Q96GD3-5</id>
        <name evidence="4">5</name>
        <sequence type="described" ref="VSP_051678 VSP_051679"/>
    </isoform>
    <isoform>
        <id>Q96GD3-6</id>
        <name>6</name>
        <sequence type="described" ref="VSP_051677 VSP_043395 VSP_051679"/>
    </isoform>
</comment>
<comment type="tissue specificity">
    <text evidence="4">Strongly expressed in heart, muscle and pancreas. Weakly expressed in brain, placenta, lung, liver and kidney.</text>
</comment>
<comment type="miscellaneous">
    <molecule>Isoform 5</molecule>
    <text evidence="5">May be due to intron retention.</text>
</comment>
<comment type="similarity">
    <text evidence="10">Belongs to the SCM family.</text>
</comment>
<evidence type="ECO:0000250" key="1"/>
<evidence type="ECO:0000255" key="2">
    <source>
        <dbReference type="PROSITE-ProRule" id="PRU00184"/>
    </source>
</evidence>
<evidence type="ECO:0000256" key="3">
    <source>
        <dbReference type="SAM" id="MobiDB-lite"/>
    </source>
</evidence>
<evidence type="ECO:0000269" key="4">
    <source>
    </source>
</evidence>
<evidence type="ECO:0000303" key="5">
    <source>
    </source>
</evidence>
<evidence type="ECO:0000303" key="6">
    <source>
    </source>
</evidence>
<evidence type="ECO:0000303" key="7">
    <source>
    </source>
</evidence>
<evidence type="ECO:0000303" key="8">
    <source>
    </source>
</evidence>
<evidence type="ECO:0000303" key="9">
    <source ref="3"/>
</evidence>
<evidence type="ECO:0000305" key="10"/>
<evidence type="ECO:0000312" key="11">
    <source>
        <dbReference type="EMBL" id="AAF01150.1"/>
    </source>
</evidence>
<evidence type="ECO:0000312" key="12">
    <source>
        <dbReference type="EMBL" id="AAH09752.1"/>
    </source>
</evidence>
<evidence type="ECO:0000312" key="13">
    <source>
        <dbReference type="EMBL" id="AAH21252.1"/>
    </source>
</evidence>
<evidence type="ECO:0000312" key="14">
    <source>
        <dbReference type="EMBL" id="CAG33442.1"/>
    </source>
</evidence>
<evidence type="ECO:0000312" key="15">
    <source>
        <dbReference type="EMBL" id="CAH72793.1"/>
    </source>
</evidence>
<evidence type="ECO:0007829" key="16">
    <source>
        <dbReference type="PDB" id="2P0K"/>
    </source>
</evidence>
<name>SCMH1_HUMAN</name>